<name>ENOPH_PODAN</name>
<feature type="chain" id="PRO_0000394009" description="Enolase-phosphatase E1">
    <location>
        <begin position="1"/>
        <end position="234"/>
    </location>
</feature>
<feature type="binding site" evidence="1">
    <location>
        <position position="13"/>
    </location>
    <ligand>
        <name>Mg(2+)</name>
        <dbReference type="ChEBI" id="CHEBI:18420"/>
    </ligand>
</feature>
<feature type="binding site" evidence="1">
    <location>
        <position position="15"/>
    </location>
    <ligand>
        <name>Mg(2+)</name>
        <dbReference type="ChEBI" id="CHEBI:18420"/>
    </ligand>
</feature>
<feature type="binding site" evidence="1">
    <location>
        <begin position="127"/>
        <end position="128"/>
    </location>
    <ligand>
        <name>substrate</name>
    </ligand>
</feature>
<feature type="binding site" evidence="1">
    <location>
        <position position="164"/>
    </location>
    <ligand>
        <name>substrate</name>
    </ligand>
</feature>
<feature type="binding site" evidence="1">
    <location>
        <position position="191"/>
    </location>
    <ligand>
        <name>Mg(2+)</name>
        <dbReference type="ChEBI" id="CHEBI:18420"/>
    </ligand>
</feature>
<gene>
    <name evidence="1" type="primary">UTR4</name>
    <name type="ordered locus">Pa_7_8840</name>
    <name type="ORF">PODANS_7_8840</name>
</gene>
<keyword id="KW-0028">Amino-acid biosynthesis</keyword>
<keyword id="KW-0963">Cytoplasm</keyword>
<keyword id="KW-0378">Hydrolase</keyword>
<keyword id="KW-0460">Magnesium</keyword>
<keyword id="KW-0479">Metal-binding</keyword>
<keyword id="KW-0486">Methionine biosynthesis</keyword>
<keyword id="KW-0539">Nucleus</keyword>
<keyword id="KW-1185">Reference proteome</keyword>
<dbReference type="EC" id="3.1.3.77" evidence="1"/>
<dbReference type="EMBL" id="CU633900">
    <property type="protein sequence ID" value="CAP68923.1"/>
    <property type="molecule type" value="Genomic_DNA"/>
</dbReference>
<dbReference type="EMBL" id="FO904942">
    <property type="protein sequence ID" value="CDP32395.1"/>
    <property type="molecule type" value="Genomic_DNA"/>
</dbReference>
<dbReference type="RefSeq" id="XP_001908250.1">
    <property type="nucleotide sequence ID" value="XM_001908215.1"/>
</dbReference>
<dbReference type="SMR" id="B2AWZ9"/>
<dbReference type="FunCoup" id="B2AWZ9">
    <property type="interactions" value="622"/>
</dbReference>
<dbReference type="STRING" id="515849.B2AWZ9"/>
<dbReference type="GeneID" id="6191966"/>
<dbReference type="KEGG" id="pan:PODANSg5285"/>
<dbReference type="VEuPathDB" id="FungiDB:PODANS_7_8840"/>
<dbReference type="eggNOG" id="KOG2630">
    <property type="taxonomic scope" value="Eukaryota"/>
</dbReference>
<dbReference type="HOGENOM" id="CLU_023273_1_1_1"/>
<dbReference type="InParanoid" id="B2AWZ9"/>
<dbReference type="OrthoDB" id="272500at2759"/>
<dbReference type="UniPathway" id="UPA00904">
    <property type="reaction ID" value="UER00876"/>
</dbReference>
<dbReference type="UniPathway" id="UPA00904">
    <property type="reaction ID" value="UER00877"/>
</dbReference>
<dbReference type="Proteomes" id="UP000001197">
    <property type="component" value="Chromosome 7"/>
</dbReference>
<dbReference type="GO" id="GO:0005737">
    <property type="term" value="C:cytoplasm"/>
    <property type="evidence" value="ECO:0007669"/>
    <property type="project" value="UniProtKB-SubCell"/>
</dbReference>
<dbReference type="GO" id="GO:0005634">
    <property type="term" value="C:nucleus"/>
    <property type="evidence" value="ECO:0007669"/>
    <property type="project" value="UniProtKB-SubCell"/>
</dbReference>
<dbReference type="GO" id="GO:0043874">
    <property type="term" value="F:acireductone synthase activity"/>
    <property type="evidence" value="ECO:0007669"/>
    <property type="project" value="UniProtKB-EC"/>
</dbReference>
<dbReference type="GO" id="GO:0000287">
    <property type="term" value="F:magnesium ion binding"/>
    <property type="evidence" value="ECO:0007669"/>
    <property type="project" value="UniProtKB-UniRule"/>
</dbReference>
<dbReference type="GO" id="GO:0019509">
    <property type="term" value="P:L-methionine salvage from methylthioadenosine"/>
    <property type="evidence" value="ECO:0007669"/>
    <property type="project" value="UniProtKB-UniRule"/>
</dbReference>
<dbReference type="CDD" id="cd01629">
    <property type="entry name" value="HAD_EP"/>
    <property type="match status" value="1"/>
</dbReference>
<dbReference type="FunFam" id="1.10.720.60:FF:000007">
    <property type="entry name" value="Enolase-phosphatase E1"/>
    <property type="match status" value="1"/>
</dbReference>
<dbReference type="Gene3D" id="1.10.720.60">
    <property type="match status" value="1"/>
</dbReference>
<dbReference type="Gene3D" id="3.40.50.1000">
    <property type="entry name" value="HAD superfamily/HAD-like"/>
    <property type="match status" value="1"/>
</dbReference>
<dbReference type="HAMAP" id="MF_03117">
    <property type="entry name" value="Salvage_MtnC_euk"/>
    <property type="match status" value="1"/>
</dbReference>
<dbReference type="InterPro" id="IPR023943">
    <property type="entry name" value="Enolase-ppase_E1"/>
</dbReference>
<dbReference type="InterPro" id="IPR027511">
    <property type="entry name" value="ENOPH1_eukaryotes"/>
</dbReference>
<dbReference type="InterPro" id="IPR036412">
    <property type="entry name" value="HAD-like_sf"/>
</dbReference>
<dbReference type="InterPro" id="IPR023214">
    <property type="entry name" value="HAD_sf"/>
</dbReference>
<dbReference type="NCBIfam" id="TIGR01691">
    <property type="entry name" value="enolase-ppase"/>
    <property type="match status" value="1"/>
</dbReference>
<dbReference type="PANTHER" id="PTHR20371">
    <property type="entry name" value="ENOLASE-PHOSPHATASE E1"/>
    <property type="match status" value="1"/>
</dbReference>
<dbReference type="PANTHER" id="PTHR20371:SF1">
    <property type="entry name" value="ENOLASE-PHOSPHATASE E1"/>
    <property type="match status" value="1"/>
</dbReference>
<dbReference type="SFLD" id="SFLDG01133">
    <property type="entry name" value="C1.5.4:_Enolase-phosphatase_Li"/>
    <property type="match status" value="1"/>
</dbReference>
<dbReference type="SFLD" id="SFLDG01129">
    <property type="entry name" value="C1.5:_HAD__Beta-PGM__Phosphata"/>
    <property type="match status" value="1"/>
</dbReference>
<dbReference type="SUPFAM" id="SSF56784">
    <property type="entry name" value="HAD-like"/>
    <property type="match status" value="1"/>
</dbReference>
<evidence type="ECO:0000255" key="1">
    <source>
        <dbReference type="HAMAP-Rule" id="MF_03117"/>
    </source>
</evidence>
<protein>
    <recommendedName>
        <fullName evidence="1">Enolase-phosphatase E1</fullName>
        <ecNumber evidence="1">3.1.3.77</ecNumber>
    </recommendedName>
    <alternativeName>
        <fullName evidence="1">2,3-diketo-5-methylthio-1-phosphopentane phosphatase</fullName>
    </alternativeName>
</protein>
<accession>B2AWZ9</accession>
<accession>A0A090CTY8</accession>
<organism>
    <name type="scientific">Podospora anserina (strain S / ATCC MYA-4624 / DSM 980 / FGSC 10383)</name>
    <name type="common">Pleurage anserina</name>
    <dbReference type="NCBI Taxonomy" id="515849"/>
    <lineage>
        <taxon>Eukaryota</taxon>
        <taxon>Fungi</taxon>
        <taxon>Dikarya</taxon>
        <taxon>Ascomycota</taxon>
        <taxon>Pezizomycotina</taxon>
        <taxon>Sordariomycetes</taxon>
        <taxon>Sordariomycetidae</taxon>
        <taxon>Sordariales</taxon>
        <taxon>Podosporaceae</taxon>
        <taxon>Podospora</taxon>
        <taxon>Podospora anserina</taxon>
    </lineage>
</organism>
<reference key="1">
    <citation type="journal article" date="2008" name="Genome Biol.">
        <title>The genome sequence of the model ascomycete fungus Podospora anserina.</title>
        <authorList>
            <person name="Espagne E."/>
            <person name="Lespinet O."/>
            <person name="Malagnac F."/>
            <person name="Da Silva C."/>
            <person name="Jaillon O."/>
            <person name="Porcel B.M."/>
            <person name="Couloux A."/>
            <person name="Aury J.-M."/>
            <person name="Segurens B."/>
            <person name="Poulain J."/>
            <person name="Anthouard V."/>
            <person name="Grossetete S."/>
            <person name="Khalili H."/>
            <person name="Coppin E."/>
            <person name="Dequard-Chablat M."/>
            <person name="Picard M."/>
            <person name="Contamine V."/>
            <person name="Arnaise S."/>
            <person name="Bourdais A."/>
            <person name="Berteaux-Lecellier V."/>
            <person name="Gautheret D."/>
            <person name="de Vries R.P."/>
            <person name="Battaglia E."/>
            <person name="Coutinho P.M."/>
            <person name="Danchin E.G.J."/>
            <person name="Henrissat B."/>
            <person name="El Khoury R."/>
            <person name="Sainsard-Chanet A."/>
            <person name="Boivin A."/>
            <person name="Pinan-Lucarre B."/>
            <person name="Sellem C.H."/>
            <person name="Debuchy R."/>
            <person name="Wincker P."/>
            <person name="Weissenbach J."/>
            <person name="Silar P."/>
        </authorList>
    </citation>
    <scope>NUCLEOTIDE SEQUENCE [LARGE SCALE GENOMIC DNA]</scope>
    <source>
        <strain>S / ATCC MYA-4624 / DSM 980 / FGSC 10383</strain>
    </source>
</reference>
<reference key="2">
    <citation type="journal article" date="2014" name="Genetics">
        <title>Maintaining two mating types: Structure of the mating type locus and its role in heterokaryosis in Podospora anserina.</title>
        <authorList>
            <person name="Grognet P."/>
            <person name="Bidard F."/>
            <person name="Kuchly C."/>
            <person name="Tong L.C.H."/>
            <person name="Coppin E."/>
            <person name="Benkhali J.A."/>
            <person name="Couloux A."/>
            <person name="Wincker P."/>
            <person name="Debuchy R."/>
            <person name="Silar P."/>
        </authorList>
    </citation>
    <scope>GENOME REANNOTATION</scope>
    <source>
        <strain>S / ATCC MYA-4624 / DSM 980 / FGSC 10383</strain>
    </source>
</reference>
<comment type="function">
    <text evidence="1">Bifunctional enzyme that catalyzes the enolization of 2,3-diketo-5-methylthiopentyl-1-phosphate (DK-MTP-1-P) into the intermediate 2-hydroxy-3-keto-5-methylthiopentenyl-1-phosphate (HK-MTPenyl-1-P), which is then dephosphorylated to form the acireductone 1,2-dihydroxy-3-keto-5-methylthiopentene (DHK-MTPene).</text>
</comment>
<comment type="catalytic activity">
    <reaction evidence="1">
        <text>5-methylsulfanyl-2,3-dioxopentyl phosphate + H2O = 1,2-dihydroxy-5-(methylsulfanyl)pent-1-en-3-one + phosphate</text>
        <dbReference type="Rhea" id="RHEA:21700"/>
        <dbReference type="ChEBI" id="CHEBI:15377"/>
        <dbReference type="ChEBI" id="CHEBI:43474"/>
        <dbReference type="ChEBI" id="CHEBI:49252"/>
        <dbReference type="ChEBI" id="CHEBI:58828"/>
        <dbReference type="EC" id="3.1.3.77"/>
    </reaction>
</comment>
<comment type="cofactor">
    <cofactor evidence="1">
        <name>Mg(2+)</name>
        <dbReference type="ChEBI" id="CHEBI:18420"/>
    </cofactor>
    <text evidence="1">Binds 1 Mg(2+) ion per subunit.</text>
</comment>
<comment type="pathway">
    <text evidence="1">Amino-acid biosynthesis; L-methionine biosynthesis via salvage pathway; L-methionine from S-methyl-5-thio-alpha-D-ribose 1-phosphate: step 3/6.</text>
</comment>
<comment type="pathway">
    <text evidence="1">Amino-acid biosynthesis; L-methionine biosynthesis via salvage pathway; L-methionine from S-methyl-5-thio-alpha-D-ribose 1-phosphate: step 4/6.</text>
</comment>
<comment type="subunit">
    <text evidence="1">Monomer.</text>
</comment>
<comment type="subcellular location">
    <subcellularLocation>
        <location evidence="1">Cytoplasm</location>
    </subcellularLocation>
    <subcellularLocation>
        <location evidence="1">Nucleus</location>
    </subcellularLocation>
</comment>
<comment type="similarity">
    <text evidence="1">Belongs to the HAD-like hydrolase superfamily. MasA/MtnC family.</text>
</comment>
<proteinExistence type="inferred from homology"/>
<sequence length="234" mass="25910">MASSGQPKVVLLDIEGTVCPISFVKDVLFPYALSALPATLEAQWDKPEFSQYRDAFPAEHASSQEALTAHVKDLMSRDVKIAYLKSLQGYLWESGYKSGELKAPLFDDVAPKFVQWKKAGEEIMIYSSGSVAAQKLLFKHTNGHPADLIPEISDFFDTVNAGPKQEASSYQTILAAHPEFPEANSWLFLSDNVKEVEAAKQAGMQSFVVERPGNAELSAEDREKHRVIKTFAEI</sequence>